<protein>
    <recommendedName>
        <fullName evidence="2">Large-conductance mechanosensitive channel</fullName>
    </recommendedName>
</protein>
<feature type="chain" id="PRO_0000192466" description="Large-conductance mechanosensitive channel">
    <location>
        <begin position="1"/>
        <end position="120"/>
    </location>
</feature>
<feature type="topological domain" description="Cytoplasmic" evidence="5">
    <location>
        <begin position="1"/>
        <end position="14"/>
    </location>
</feature>
<feature type="transmembrane region" description="Helical" evidence="5">
    <location>
        <begin position="15"/>
        <end position="43"/>
    </location>
</feature>
<feature type="topological domain" description="Extracellular" evidence="5">
    <location>
        <begin position="44"/>
        <end position="62"/>
    </location>
</feature>
<feature type="transmembrane region" description="Helical" evidence="5">
    <location>
        <begin position="63"/>
        <end position="82"/>
    </location>
</feature>
<feature type="topological domain" description="Cytoplasmic" evidence="5">
    <location>
        <begin position="83"/>
        <end position="120"/>
    </location>
</feature>
<sequence>MLKEFKEFALKGNVLDLAIAVVMGAAFNKIISSLVENIIMPLIGKIFGSVDFAKEWSFWGIKYGLFIQSVIDFIIIAFALFIFVKIANTLMKKEEAEEEAVVEENVVLLTEIRDLLREKK</sequence>
<name>MSCL_STAAW</name>
<reference key="1">
    <citation type="journal article" date="2002" name="Lancet">
        <title>Genome and virulence determinants of high virulence community-acquired MRSA.</title>
        <authorList>
            <person name="Baba T."/>
            <person name="Takeuchi F."/>
            <person name="Kuroda M."/>
            <person name="Yuzawa H."/>
            <person name="Aoki K."/>
            <person name="Oguchi A."/>
            <person name="Nagai Y."/>
            <person name="Iwama N."/>
            <person name="Asano K."/>
            <person name="Naimi T."/>
            <person name="Kuroda H."/>
            <person name="Cui L."/>
            <person name="Yamamoto K."/>
            <person name="Hiramatsu K."/>
        </authorList>
    </citation>
    <scope>NUCLEOTIDE SEQUENCE [LARGE SCALE GENOMIC DNA]</scope>
    <source>
        <strain>MW2</strain>
    </source>
</reference>
<reference evidence="6" key="2">
    <citation type="journal article" date="2009" name="Nature">
        <title>Structure of a tetrameric MscL in an expanded intermediate state.</title>
        <authorList>
            <person name="Liu Z."/>
            <person name="Gandhi C.S."/>
            <person name="Rees D.C."/>
        </authorList>
    </citation>
    <scope>X-RAY CRYSTALLOGRAPHY (3.82 ANGSTROMS) OF 1-94</scope>
    <scope>FUNCTION</scope>
    <scope>SUBUNIT</scope>
    <scope>SUBCELLULAR LOCATION</scope>
    <scope>TOPOLOGY</scope>
</reference>
<keyword id="KW-0002">3D-structure</keyword>
<keyword id="KW-1003">Cell membrane</keyword>
<keyword id="KW-0407">Ion channel</keyword>
<keyword id="KW-0406">Ion transport</keyword>
<keyword id="KW-0472">Membrane</keyword>
<keyword id="KW-0812">Transmembrane</keyword>
<keyword id="KW-1133">Transmembrane helix</keyword>
<keyword id="KW-0813">Transport</keyword>
<comment type="function">
    <text evidence="3">Channel that opens in response to stretch forces in the membrane lipid bilayer. Forms a nonselective ion channel with a conductance of about 3 nanosiemens. May participate in the regulation of osmotic pressure changes within the cell.</text>
</comment>
<comment type="subunit">
    <text evidence="1 2 3">Homopentamer (By similarity). Can form a homotetramer (in vitro), but this may not be physiologically relevant (PubMed:19701184).</text>
</comment>
<comment type="interaction">
    <interactant intactId="EBI-15799893">
        <id>P68806</id>
    </interactant>
    <interactant intactId="EBI-15799893">
        <id>P68806</id>
        <label>mscL</label>
    </interactant>
    <organismsDiffer>false</organismsDiffer>
    <experiments>3</experiments>
</comment>
<comment type="subcellular location">
    <subcellularLocation>
        <location evidence="2 5">Cell membrane</location>
        <topology evidence="2 5">Multi-pass membrane protein</topology>
    </subcellularLocation>
</comment>
<comment type="similarity">
    <text evidence="2 4">Belongs to the MscL family.</text>
</comment>
<dbReference type="EMBL" id="BA000033">
    <property type="protein sequence ID" value="BAB95100.1"/>
    <property type="molecule type" value="Genomic_DNA"/>
</dbReference>
<dbReference type="RefSeq" id="WP_000910489.1">
    <property type="nucleotide sequence ID" value="NC_003923.1"/>
</dbReference>
<dbReference type="PDB" id="3HZQ">
    <property type="method" value="X-ray"/>
    <property type="resolution" value="3.82 A"/>
    <property type="chains" value="A=1-94"/>
</dbReference>
<dbReference type="PDBsum" id="3HZQ"/>
<dbReference type="SMR" id="P68806"/>
<dbReference type="DIP" id="DIP-59298N"/>
<dbReference type="KEGG" id="sam:MW1235"/>
<dbReference type="HOGENOM" id="CLU_095787_0_0_9"/>
<dbReference type="EvolutionaryTrace" id="P68806"/>
<dbReference type="GO" id="GO:0005886">
    <property type="term" value="C:plasma membrane"/>
    <property type="evidence" value="ECO:0007669"/>
    <property type="project" value="UniProtKB-SubCell"/>
</dbReference>
<dbReference type="GO" id="GO:0042802">
    <property type="term" value="F:identical protein binding"/>
    <property type="evidence" value="ECO:0000353"/>
    <property type="project" value="IntAct"/>
</dbReference>
<dbReference type="GO" id="GO:0008381">
    <property type="term" value="F:mechanosensitive monoatomic ion channel activity"/>
    <property type="evidence" value="ECO:0007669"/>
    <property type="project" value="UniProtKB-UniRule"/>
</dbReference>
<dbReference type="FunFam" id="1.10.1200.120:FF:000002">
    <property type="entry name" value="Large-conductance mechanosensitive channel"/>
    <property type="match status" value="1"/>
</dbReference>
<dbReference type="Gene3D" id="1.10.1200.120">
    <property type="entry name" value="Large-conductance mechanosensitive channel, MscL, domain 1"/>
    <property type="match status" value="1"/>
</dbReference>
<dbReference type="HAMAP" id="MF_00115">
    <property type="entry name" value="MscL"/>
    <property type="match status" value="1"/>
</dbReference>
<dbReference type="InterPro" id="IPR019823">
    <property type="entry name" value="Mechanosensitive_channel_CS"/>
</dbReference>
<dbReference type="InterPro" id="IPR001185">
    <property type="entry name" value="MS_channel"/>
</dbReference>
<dbReference type="InterPro" id="IPR037673">
    <property type="entry name" value="MSC/AndL"/>
</dbReference>
<dbReference type="InterPro" id="IPR036019">
    <property type="entry name" value="MscL_channel"/>
</dbReference>
<dbReference type="NCBIfam" id="TIGR00220">
    <property type="entry name" value="mscL"/>
    <property type="match status" value="1"/>
</dbReference>
<dbReference type="NCBIfam" id="NF010559">
    <property type="entry name" value="PRK13954.1"/>
    <property type="match status" value="1"/>
</dbReference>
<dbReference type="PANTHER" id="PTHR30266:SF2">
    <property type="entry name" value="LARGE-CONDUCTANCE MECHANOSENSITIVE CHANNEL"/>
    <property type="match status" value="1"/>
</dbReference>
<dbReference type="PANTHER" id="PTHR30266">
    <property type="entry name" value="MECHANOSENSITIVE CHANNEL MSCL"/>
    <property type="match status" value="1"/>
</dbReference>
<dbReference type="Pfam" id="PF01741">
    <property type="entry name" value="MscL"/>
    <property type="match status" value="1"/>
</dbReference>
<dbReference type="PRINTS" id="PR01264">
    <property type="entry name" value="MECHCHANNEL"/>
</dbReference>
<dbReference type="SUPFAM" id="SSF81330">
    <property type="entry name" value="Gated mechanosensitive channel"/>
    <property type="match status" value="1"/>
</dbReference>
<dbReference type="PROSITE" id="PS01327">
    <property type="entry name" value="MSCL"/>
    <property type="match status" value="1"/>
</dbReference>
<evidence type="ECO:0000250" key="1">
    <source>
        <dbReference type="UniProtKB" id="Q6G9L1"/>
    </source>
</evidence>
<evidence type="ECO:0000255" key="2">
    <source>
        <dbReference type="HAMAP-Rule" id="MF_00115"/>
    </source>
</evidence>
<evidence type="ECO:0000269" key="3">
    <source>
    </source>
</evidence>
<evidence type="ECO:0000305" key="4"/>
<evidence type="ECO:0000305" key="5">
    <source>
    </source>
</evidence>
<evidence type="ECO:0007744" key="6">
    <source>
        <dbReference type="PDB" id="3HZQ"/>
    </source>
</evidence>
<proteinExistence type="evidence at protein level"/>
<accession>P68806</accession>
<accession>O68285</accession>
<organism>
    <name type="scientific">Staphylococcus aureus (strain MW2)</name>
    <dbReference type="NCBI Taxonomy" id="196620"/>
    <lineage>
        <taxon>Bacteria</taxon>
        <taxon>Bacillati</taxon>
        <taxon>Bacillota</taxon>
        <taxon>Bacilli</taxon>
        <taxon>Bacillales</taxon>
        <taxon>Staphylococcaceae</taxon>
        <taxon>Staphylococcus</taxon>
    </lineage>
</organism>
<gene>
    <name evidence="2" type="primary">mscL</name>
    <name type="ordered locus">MW1235</name>
</gene>